<feature type="chain" id="PRO_0000184803" description="Transcription factor AP-2 gamma">
    <location>
        <begin position="1"/>
        <end position="450"/>
    </location>
</feature>
<feature type="region of interest" description="Disordered" evidence="3">
    <location>
        <begin position="13"/>
        <end position="63"/>
    </location>
</feature>
<feature type="region of interest" description="Disordered" evidence="3">
    <location>
        <begin position="90"/>
        <end position="126"/>
    </location>
</feature>
<feature type="region of interest" description="H-S-H (helix-span-helix), dimerization">
    <location>
        <begin position="293"/>
        <end position="424"/>
    </location>
</feature>
<feature type="region of interest" description="Disordered" evidence="3">
    <location>
        <begin position="431"/>
        <end position="450"/>
    </location>
</feature>
<feature type="short sequence motif" description="PPxY motif">
    <location>
        <begin position="59"/>
        <end position="64"/>
    </location>
</feature>
<feature type="compositionally biased region" description="Polar residues" evidence="3">
    <location>
        <begin position="95"/>
        <end position="110"/>
    </location>
</feature>
<feature type="compositionally biased region" description="Basic and acidic residues" evidence="3">
    <location>
        <begin position="440"/>
        <end position="450"/>
    </location>
</feature>
<feature type="modified residue" description="Phosphoserine; by PKA" evidence="1">
    <location>
        <position position="252"/>
    </location>
</feature>
<feature type="modified residue" description="Phosphoserine" evidence="13 14 15">
    <location>
        <position position="434"/>
    </location>
</feature>
<feature type="cross-link" description="Glycyl lysine isopeptide (Lys-Gly) (interchain with G-Cter in SUMO)" evidence="6">
    <location>
        <position position="10"/>
    </location>
</feature>
<feature type="splice variant" id="VSP_056501" description="In isoform 2." evidence="11">
    <location>
        <begin position="1"/>
        <end position="169"/>
    </location>
</feature>
<feature type="mutagenesis site" description="Loss of interaction with WWOX; when associated with A-64." evidence="8">
    <original>Y</original>
    <variation>A</variation>
    <location>
        <position position="59"/>
    </location>
</feature>
<feature type="mutagenesis site" description="Loss of interaction with WWOX; when associated with A-59." evidence="8">
    <original>Y</original>
    <variation>A</variation>
    <location>
        <position position="64"/>
    </location>
</feature>
<comment type="function">
    <text evidence="2 4 10">Sequence-specific DNA-binding transcription factor that interacts with cellular enhancer elements to regulate transcription of selected genes, and which plays a key role in early embryonic development (PubMed:11694877, PubMed:24413532). AP-2 factors bind to the consensus sequence 5'-GCCNNNGGC-3' and activate genes involved in a large spectrum of important biological functions (PubMed:11694877, PubMed:24413532). TFAP2C plays a key role in early embryonic development by regulating both inner cell mass (ICM) and trophectoderm differentiation (By similarity). At the 8-cell stage, during morula development, controls expression of cell-polarity genes (By similarity). Upon trophoblast commitment, binds to late trophectoderm genes in blastocysts together with CDX2, and later to extra-embryonic ectoderm genes together with SOX2 (By similarity). Binds to both closed and open chromatin with other transcription factors (By similarity). Involved in the MTA1-mediated epigenetic regulation of ESR1 expression in breast cancer (PubMed:24413532).</text>
</comment>
<comment type="subunit">
    <text evidence="4 5 6 7 8 9 10">Binds DNA as a dimer (PubMed:11694877). Can form homodimers or heterodimers with other AP-2 family members (PubMed:11694877). Interacts with WWOX (PubMed:15548692). Interacts with UBE2I (PubMed:12072434). Interacts with KCTD1; this interaction represses transcription activation (PubMed:19115315). Interacts with CITED2 (via C-terminus); the interaction stimulates TFAP2B-transcriptional activity (PubMed:11694877, PubMed:12586840). Interacts with CITED4 (PubMed:11744733). Interacts with MTA1 (PubMed:24413532).</text>
</comment>
<comment type="interaction">
    <interactant intactId="EBI-937309">
        <id>Q92754</id>
    </interactant>
    <interactant intactId="EBI-937732">
        <id>Q99967</id>
        <label>CITED2</label>
    </interactant>
    <organismsDiffer>false</organismsDiffer>
    <experiments>2</experiments>
</comment>
<comment type="interaction">
    <interactant intactId="EBI-937309">
        <id>Q92754</id>
    </interactant>
    <interactant intactId="EBI-80168">
        <id>P63279</id>
        <label>UBE2I</label>
    </interactant>
    <organismsDiffer>false</organismsDiffer>
    <experiments>5</experiments>
</comment>
<comment type="subcellular location">
    <subcellularLocation>
        <location evidence="10">Nucleus</location>
    </subcellularLocation>
</comment>
<comment type="alternative products">
    <event type="alternative splicing"/>
    <isoform>
        <id>Q92754-1</id>
        <name>1</name>
        <sequence type="displayed"/>
    </isoform>
    <isoform>
        <id>Q92754-2</id>
        <name>2</name>
        <sequence type="described" ref="VSP_056501"/>
    </isoform>
</comment>
<comment type="induction">
    <text>During retinoic acid-mediated differentiation.</text>
</comment>
<comment type="domain">
    <text evidence="8">The PPxY motif mediates interaction with WWOX.</text>
</comment>
<comment type="PTM">
    <text evidence="6">Sumoylated on Lys-10; which inhibits transcriptional activity.</text>
</comment>
<comment type="similarity">
    <text evidence="12">Belongs to the AP-2 family.</text>
</comment>
<comment type="online information" name="Wikipedia">
    <link uri="https://en.wikipedia.org/wiki/Activating_protein_2"/>
    <text>Activating protein 2 entry</text>
</comment>
<organism>
    <name type="scientific">Homo sapiens</name>
    <name type="common">Human</name>
    <dbReference type="NCBI Taxonomy" id="9606"/>
    <lineage>
        <taxon>Eukaryota</taxon>
        <taxon>Metazoa</taxon>
        <taxon>Chordata</taxon>
        <taxon>Craniata</taxon>
        <taxon>Vertebrata</taxon>
        <taxon>Euteleostomi</taxon>
        <taxon>Mammalia</taxon>
        <taxon>Eutheria</taxon>
        <taxon>Euarchontoglires</taxon>
        <taxon>Primates</taxon>
        <taxon>Haplorrhini</taxon>
        <taxon>Catarrhini</taxon>
        <taxon>Hominidae</taxon>
        <taxon>Homo</taxon>
    </lineage>
</organism>
<protein>
    <recommendedName>
        <fullName>Transcription factor AP-2 gamma</fullName>
        <shortName>AP2-gamma</shortName>
    </recommendedName>
    <alternativeName>
        <fullName>Activating enhancer-binding protein 2 gamma</fullName>
    </alternativeName>
    <alternativeName>
        <fullName>Transcription factor ERF-1</fullName>
    </alternativeName>
</protein>
<name>AP2C_HUMAN</name>
<evidence type="ECO:0000250" key="1"/>
<evidence type="ECO:0000250" key="2">
    <source>
        <dbReference type="UniProtKB" id="Q61312"/>
    </source>
</evidence>
<evidence type="ECO:0000256" key="3">
    <source>
        <dbReference type="SAM" id="MobiDB-lite"/>
    </source>
</evidence>
<evidence type="ECO:0000269" key="4">
    <source>
    </source>
</evidence>
<evidence type="ECO:0000269" key="5">
    <source>
    </source>
</evidence>
<evidence type="ECO:0000269" key="6">
    <source>
    </source>
</evidence>
<evidence type="ECO:0000269" key="7">
    <source>
    </source>
</evidence>
<evidence type="ECO:0000269" key="8">
    <source>
    </source>
</evidence>
<evidence type="ECO:0000269" key="9">
    <source>
    </source>
</evidence>
<evidence type="ECO:0000269" key="10">
    <source>
    </source>
</evidence>
<evidence type="ECO:0000303" key="11">
    <source>
    </source>
</evidence>
<evidence type="ECO:0000305" key="12"/>
<evidence type="ECO:0007744" key="13">
    <source>
    </source>
</evidence>
<evidence type="ECO:0007744" key="14">
    <source>
    </source>
</evidence>
<evidence type="ECO:0007744" key="15">
    <source>
    </source>
</evidence>
<keyword id="KW-0010">Activator</keyword>
<keyword id="KW-0025">Alternative splicing</keyword>
<keyword id="KW-0903">Direct protein sequencing</keyword>
<keyword id="KW-0238">DNA-binding</keyword>
<keyword id="KW-1017">Isopeptide bond</keyword>
<keyword id="KW-0539">Nucleus</keyword>
<keyword id="KW-0597">Phosphoprotein</keyword>
<keyword id="KW-1267">Proteomics identification</keyword>
<keyword id="KW-1185">Reference proteome</keyword>
<keyword id="KW-0804">Transcription</keyword>
<keyword id="KW-0805">Transcription regulation</keyword>
<keyword id="KW-0832">Ubl conjugation</keyword>
<proteinExistence type="evidence at protein level"/>
<accession>Q92754</accession>
<accession>B4DWK3</accession>
<accession>O00685</accession>
<accession>O00730</accession>
<accession>Q86V30</accession>
<accession>Q8IVB6</accession>
<accession>Q9P1X2</accession>
<dbReference type="EMBL" id="X95693">
    <property type="protein sequence ID" value="CAA64989.1"/>
    <property type="molecule type" value="mRNA"/>
</dbReference>
<dbReference type="EMBL" id="U85658">
    <property type="protein sequence ID" value="AAC51305.1"/>
    <property type="molecule type" value="mRNA"/>
</dbReference>
<dbReference type="EMBL" id="AJ315934">
    <property type="protein sequence ID" value="CAC86997.1"/>
    <property type="molecule type" value="Genomic_DNA"/>
</dbReference>
<dbReference type="EMBL" id="AK301572">
    <property type="protein sequence ID" value="BAG63065.1"/>
    <property type="molecule type" value="mRNA"/>
</dbReference>
<dbReference type="EMBL" id="AL121920">
    <property type="status" value="NOT_ANNOTATED_CDS"/>
    <property type="molecule type" value="Genomic_DNA"/>
</dbReference>
<dbReference type="EMBL" id="BC035664">
    <property type="protein sequence ID" value="AAH35664.2"/>
    <property type="molecule type" value="mRNA"/>
</dbReference>
<dbReference type="EMBL" id="BC051829">
    <property type="protein sequence ID" value="AAH51829.2"/>
    <property type="molecule type" value="mRNA"/>
</dbReference>
<dbReference type="EMBL" id="AB041717">
    <property type="protein sequence ID" value="BAC11805.1"/>
    <property type="molecule type" value="Genomic_DNA"/>
</dbReference>
<dbReference type="CCDS" id="CCDS13454.1">
    <molecule id="Q92754-1"/>
</dbReference>
<dbReference type="RefSeq" id="NP_003213.1">
    <molecule id="Q92754-1"/>
    <property type="nucleotide sequence ID" value="NM_003222.4"/>
</dbReference>
<dbReference type="SMR" id="Q92754"/>
<dbReference type="BioGRID" id="112880">
    <property type="interactions" value="37"/>
</dbReference>
<dbReference type="CORUM" id="Q92754"/>
<dbReference type="ELM" id="Q92754"/>
<dbReference type="FunCoup" id="Q92754">
    <property type="interactions" value="2337"/>
</dbReference>
<dbReference type="IntAct" id="Q92754">
    <property type="interactions" value="79"/>
</dbReference>
<dbReference type="STRING" id="9606.ENSP00000201031"/>
<dbReference type="GlyGen" id="Q92754">
    <property type="glycosylation" value="1 site, 1 O-linked glycan (1 site)"/>
</dbReference>
<dbReference type="iPTMnet" id="Q92754"/>
<dbReference type="PhosphoSitePlus" id="Q92754"/>
<dbReference type="BioMuta" id="TFAP2C"/>
<dbReference type="DMDM" id="12643310"/>
<dbReference type="jPOST" id="Q92754"/>
<dbReference type="MassIVE" id="Q92754"/>
<dbReference type="PaxDb" id="9606-ENSP00000201031"/>
<dbReference type="PeptideAtlas" id="Q92754"/>
<dbReference type="ProteomicsDB" id="5349"/>
<dbReference type="ProteomicsDB" id="75446">
    <molecule id="Q92754-1"/>
</dbReference>
<dbReference type="Pumba" id="Q92754"/>
<dbReference type="Antibodypedia" id="4230">
    <property type="antibodies" value="428 antibodies from 41 providers"/>
</dbReference>
<dbReference type="DNASU" id="7022"/>
<dbReference type="Ensembl" id="ENST00000201031.3">
    <molecule id="Q92754-1"/>
    <property type="protein sequence ID" value="ENSP00000201031.2"/>
    <property type="gene ID" value="ENSG00000087510.7"/>
</dbReference>
<dbReference type="GeneID" id="7022"/>
<dbReference type="KEGG" id="hsa:7022"/>
<dbReference type="MANE-Select" id="ENST00000201031.3">
    <property type="protein sequence ID" value="ENSP00000201031.2"/>
    <property type="RefSeq nucleotide sequence ID" value="NM_003222.4"/>
    <property type="RefSeq protein sequence ID" value="NP_003213.1"/>
</dbReference>
<dbReference type="UCSC" id="uc002xya.4">
    <molecule id="Q92754-1"/>
    <property type="organism name" value="human"/>
</dbReference>
<dbReference type="AGR" id="HGNC:11744"/>
<dbReference type="CTD" id="7022"/>
<dbReference type="DisGeNET" id="7022"/>
<dbReference type="GeneCards" id="TFAP2C"/>
<dbReference type="HGNC" id="HGNC:11744">
    <property type="gene designation" value="TFAP2C"/>
</dbReference>
<dbReference type="HPA" id="ENSG00000087510">
    <property type="expression patterns" value="Tissue enhanced (esophagus, skin)"/>
</dbReference>
<dbReference type="MIM" id="601602">
    <property type="type" value="gene"/>
</dbReference>
<dbReference type="neXtProt" id="NX_Q92754"/>
<dbReference type="OpenTargets" id="ENSG00000087510"/>
<dbReference type="PharmGKB" id="PA36461"/>
<dbReference type="VEuPathDB" id="HostDB:ENSG00000087510"/>
<dbReference type="eggNOG" id="KOG3811">
    <property type="taxonomic scope" value="Eukaryota"/>
</dbReference>
<dbReference type="GeneTree" id="ENSGT00950000182848"/>
<dbReference type="HOGENOM" id="CLU_035175_4_1_1"/>
<dbReference type="InParanoid" id="Q92754"/>
<dbReference type="OMA" id="GTRRETY"/>
<dbReference type="OrthoDB" id="6252992at2759"/>
<dbReference type="PAN-GO" id="Q92754">
    <property type="GO annotations" value="6 GO annotations based on evolutionary models"/>
</dbReference>
<dbReference type="PhylomeDB" id="Q92754"/>
<dbReference type="TreeFam" id="TF313718"/>
<dbReference type="PathwayCommons" id="Q92754"/>
<dbReference type="Reactome" id="R-HSA-3232118">
    <property type="pathway name" value="SUMOylation of transcription factors"/>
</dbReference>
<dbReference type="Reactome" id="R-HSA-8866904">
    <property type="pathway name" value="Negative regulation of activity of TFAP2 (AP-2) family transcription factors"/>
</dbReference>
<dbReference type="Reactome" id="R-HSA-8866906">
    <property type="pathway name" value="TFAP2 (AP-2) family regulates transcription of other transcription factors"/>
</dbReference>
<dbReference type="Reactome" id="R-HSA-8866907">
    <property type="pathway name" value="Activation of the TFAP2 (AP-2) family of transcription factors"/>
</dbReference>
<dbReference type="Reactome" id="R-HSA-8866910">
    <property type="pathway name" value="TFAP2 (AP-2) family regulates transcription of growth factors and their receptors"/>
</dbReference>
<dbReference type="Reactome" id="R-HSA-8866911">
    <property type="pathway name" value="TFAP2 (AP-2) family regulates transcription of cell cycle factors"/>
</dbReference>
<dbReference type="Reactome" id="R-HSA-9827857">
    <property type="pathway name" value="Specification of primordial germ cells"/>
</dbReference>
<dbReference type="Reactome" id="R-HSA-9834899">
    <property type="pathway name" value="Specification of the neural plate border"/>
</dbReference>
<dbReference type="SignaLink" id="Q92754"/>
<dbReference type="SIGNOR" id="Q92754"/>
<dbReference type="BioGRID-ORCS" id="7022">
    <property type="hits" value="70 hits in 1179 CRISPR screens"/>
</dbReference>
<dbReference type="ChiTaRS" id="TFAP2C">
    <property type="organism name" value="human"/>
</dbReference>
<dbReference type="GeneWiki" id="TFAP2C"/>
<dbReference type="GenomeRNAi" id="7022"/>
<dbReference type="Pharos" id="Q92754">
    <property type="development level" value="Tbio"/>
</dbReference>
<dbReference type="PRO" id="PR:Q92754"/>
<dbReference type="Proteomes" id="UP000005640">
    <property type="component" value="Chromosome 20"/>
</dbReference>
<dbReference type="RNAct" id="Q92754">
    <property type="molecule type" value="protein"/>
</dbReference>
<dbReference type="Bgee" id="ENSG00000087510">
    <property type="expression patterns" value="Expressed in endometrium epithelium and 132 other cell types or tissues"/>
</dbReference>
<dbReference type="ExpressionAtlas" id="Q92754">
    <property type="expression patterns" value="baseline and differential"/>
</dbReference>
<dbReference type="GO" id="GO:0000785">
    <property type="term" value="C:chromatin"/>
    <property type="evidence" value="ECO:0000247"/>
    <property type="project" value="NTNU_SB"/>
</dbReference>
<dbReference type="GO" id="GO:0005829">
    <property type="term" value="C:cytosol"/>
    <property type="evidence" value="ECO:0000304"/>
    <property type="project" value="Reactome"/>
</dbReference>
<dbReference type="GO" id="GO:0005739">
    <property type="term" value="C:mitochondrion"/>
    <property type="evidence" value="ECO:0000314"/>
    <property type="project" value="HPA"/>
</dbReference>
<dbReference type="GO" id="GO:0005654">
    <property type="term" value="C:nucleoplasm"/>
    <property type="evidence" value="ECO:0000314"/>
    <property type="project" value="HPA"/>
</dbReference>
<dbReference type="GO" id="GO:0005634">
    <property type="term" value="C:nucleus"/>
    <property type="evidence" value="ECO:0000314"/>
    <property type="project" value="UniProtKB"/>
</dbReference>
<dbReference type="GO" id="GO:0003677">
    <property type="term" value="F:DNA binding"/>
    <property type="evidence" value="ECO:0000314"/>
    <property type="project" value="UniProtKB"/>
</dbReference>
<dbReference type="GO" id="GO:0001228">
    <property type="term" value="F:DNA-binding transcription activator activity, RNA polymerase II-specific"/>
    <property type="evidence" value="ECO:0000314"/>
    <property type="project" value="UniProtKB"/>
</dbReference>
<dbReference type="GO" id="GO:0003700">
    <property type="term" value="F:DNA-binding transcription factor activity"/>
    <property type="evidence" value="ECO:0000304"/>
    <property type="project" value="ProtInc"/>
</dbReference>
<dbReference type="GO" id="GO:0000981">
    <property type="term" value="F:DNA-binding transcription factor activity, RNA polymerase II-specific"/>
    <property type="evidence" value="ECO:0000247"/>
    <property type="project" value="NTNU_SB"/>
</dbReference>
<dbReference type="GO" id="GO:0001227">
    <property type="term" value="F:DNA-binding transcription repressor activity, RNA polymerase II-specific"/>
    <property type="evidence" value="ECO:0000314"/>
    <property type="project" value="UniProtKB"/>
</dbReference>
<dbReference type="GO" id="GO:0000978">
    <property type="term" value="F:RNA polymerase II cis-regulatory region sequence-specific DNA binding"/>
    <property type="evidence" value="ECO:0000314"/>
    <property type="project" value="UniProtKB"/>
</dbReference>
<dbReference type="GO" id="GO:0000977">
    <property type="term" value="F:RNA polymerase II transcription regulatory region sequence-specific DNA binding"/>
    <property type="evidence" value="ECO:0000318"/>
    <property type="project" value="GO_Central"/>
</dbReference>
<dbReference type="GO" id="GO:1990837">
    <property type="term" value="F:sequence-specific double-stranded DNA binding"/>
    <property type="evidence" value="ECO:0000314"/>
    <property type="project" value="ARUK-UCL"/>
</dbReference>
<dbReference type="GO" id="GO:0007267">
    <property type="term" value="P:cell-cell signaling"/>
    <property type="evidence" value="ECO:0000304"/>
    <property type="project" value="ProtInc"/>
</dbReference>
<dbReference type="GO" id="GO:0021987">
    <property type="term" value="P:cerebral cortex development"/>
    <property type="evidence" value="ECO:0007669"/>
    <property type="project" value="Ensembl"/>
</dbReference>
<dbReference type="GO" id="GO:0060598">
    <property type="term" value="P:dichotomous subdivision of terminal units involved in mammary gland duct morphogenesis"/>
    <property type="evidence" value="ECO:0007669"/>
    <property type="project" value="Ensembl"/>
</dbReference>
<dbReference type="GO" id="GO:0060750">
    <property type="term" value="P:epithelial cell proliferation involved in mammary gland duct elongation"/>
    <property type="evidence" value="ECO:0007669"/>
    <property type="project" value="Ensembl"/>
</dbReference>
<dbReference type="GO" id="GO:0021877">
    <property type="term" value="P:forebrain neuron fate commitment"/>
    <property type="evidence" value="ECO:0007669"/>
    <property type="project" value="Ensembl"/>
</dbReference>
<dbReference type="GO" id="GO:0030718">
    <property type="term" value="P:germ-line stem cell population maintenance"/>
    <property type="evidence" value="ECO:0007669"/>
    <property type="project" value="Ensembl"/>
</dbReference>
<dbReference type="GO" id="GO:0001942">
    <property type="term" value="P:hair follicle development"/>
    <property type="evidence" value="ECO:0007669"/>
    <property type="project" value="Ensembl"/>
</dbReference>
<dbReference type="GO" id="GO:0001826">
    <property type="term" value="P:inner cell mass cell differentiation"/>
    <property type="evidence" value="ECO:0007669"/>
    <property type="project" value="Ensembl"/>
</dbReference>
<dbReference type="GO" id="GO:0003334">
    <property type="term" value="P:keratinocyte development"/>
    <property type="evidence" value="ECO:0007669"/>
    <property type="project" value="Ensembl"/>
</dbReference>
<dbReference type="GO" id="GO:0008584">
    <property type="term" value="P:male gonad development"/>
    <property type="evidence" value="ECO:0000270"/>
    <property type="project" value="UniProtKB"/>
</dbReference>
<dbReference type="GO" id="GO:0140001">
    <property type="term" value="P:morula formation"/>
    <property type="evidence" value="ECO:0000250"/>
    <property type="project" value="UniProtKB"/>
</dbReference>
<dbReference type="GO" id="GO:0045814">
    <property type="term" value="P:negative regulation of gene expression, epigenetic"/>
    <property type="evidence" value="ECO:0000315"/>
    <property type="project" value="UniProtKB"/>
</dbReference>
<dbReference type="GO" id="GO:0045944">
    <property type="term" value="P:positive regulation of transcription by RNA polymerase II"/>
    <property type="evidence" value="ECO:0000314"/>
    <property type="project" value="BHF-UCL"/>
</dbReference>
<dbReference type="GO" id="GO:0042127">
    <property type="term" value="P:regulation of cell population proliferation"/>
    <property type="evidence" value="ECO:0000318"/>
    <property type="project" value="GO_Central"/>
</dbReference>
<dbReference type="GO" id="GO:0045682">
    <property type="term" value="P:regulation of epidermis development"/>
    <property type="evidence" value="ECO:0007669"/>
    <property type="project" value="Ensembl"/>
</dbReference>
<dbReference type="GO" id="GO:0006357">
    <property type="term" value="P:regulation of transcription by RNA polymerase II"/>
    <property type="evidence" value="ECO:0000304"/>
    <property type="project" value="ProtInc"/>
</dbReference>
<dbReference type="GO" id="GO:0048733">
    <property type="term" value="P:sebaceous gland development"/>
    <property type="evidence" value="ECO:0007669"/>
    <property type="project" value="Ensembl"/>
</dbReference>
<dbReference type="GO" id="GO:0035019">
    <property type="term" value="P:somatic stem cell population maintenance"/>
    <property type="evidence" value="ECO:0007669"/>
    <property type="project" value="Ensembl"/>
</dbReference>
<dbReference type="GO" id="GO:0048863">
    <property type="term" value="P:stem cell differentiation"/>
    <property type="evidence" value="ECO:0007669"/>
    <property type="project" value="Ensembl"/>
</dbReference>
<dbReference type="GO" id="GO:0006366">
    <property type="term" value="P:transcription by RNA polymerase II"/>
    <property type="evidence" value="ECO:0007669"/>
    <property type="project" value="Ensembl"/>
</dbReference>
<dbReference type="GO" id="GO:0001829">
    <property type="term" value="P:trophectodermal cell differentiation"/>
    <property type="evidence" value="ECO:0007669"/>
    <property type="project" value="Ensembl"/>
</dbReference>
<dbReference type="InterPro" id="IPR004979">
    <property type="entry name" value="TF_AP2"/>
</dbReference>
<dbReference type="InterPro" id="IPR013854">
    <property type="entry name" value="TF_AP2_C"/>
</dbReference>
<dbReference type="InterPro" id="IPR008123">
    <property type="entry name" value="TF_AP2_gamma"/>
</dbReference>
<dbReference type="PANTHER" id="PTHR10812">
    <property type="entry name" value="TRANSCRIPTION FACTOR AP-2"/>
    <property type="match status" value="1"/>
</dbReference>
<dbReference type="PANTHER" id="PTHR10812:SF9">
    <property type="entry name" value="TRANSCRIPTION FACTOR AP-2 GAMMA"/>
    <property type="match status" value="1"/>
</dbReference>
<dbReference type="Pfam" id="PF03299">
    <property type="entry name" value="TF_AP-2"/>
    <property type="match status" value="1"/>
</dbReference>
<dbReference type="PRINTS" id="PR01751">
    <property type="entry name" value="AP2CTNSCPFCT"/>
</dbReference>
<dbReference type="PRINTS" id="PR01748">
    <property type="entry name" value="AP2TNSCPFCT"/>
</dbReference>
<sequence>MLWKITDNVKYEEDCEDRHDGSSNGNPRVPHLSSAGQHLYSPAPPLSHTGVAEYQPPPYFPPPYQQLAYSQSADPYSHLGEAYAAAINPLHQPAPTGSQQQAWPGRQSQEGAGLPSHHGRPAGLLPHLSGLEAGAVSARRDAYRRSDLLLPHAHALDAAGLAENLGLHDMPHQMDEVQNVDDQHLLLHDQTVIRKGPISMTKNPLNLPCQKELVGAVMNPTEVFCSVPGRLSLLSSTSKYKVTVAEVQRRLSPPECLNASLLGGVLRRAKSKNGGRSLREKLDKIGLNLPAGRRKAAHVTLLTSLVEGEAVHLARDFAYVCEAEFPSKPVAEYLTRPHLGGRNEMAARKNMLLAAQQLCKEFTELLSQDRTPHGTSRLAPVLETNIQNCLSHFSLITHGFGSQAICAAVSALQNYIKEALIVIDKSYMNPGDQSPADSNKTLEKMEKHRK</sequence>
<reference key="1">
    <citation type="journal article" date="1996" name="Genomics">
        <title>Chromosomal mapping of the human and mouse homologues of two new members of the AP-2 family of transcription factors.</title>
        <authorList>
            <person name="Williamson J.A."/>
            <person name="Bosher J.M."/>
            <person name="Skinner A."/>
            <person name="Sheer D."/>
            <person name="Williams T."/>
            <person name="Hurst H.C."/>
        </authorList>
    </citation>
    <scope>NUCLEOTIDE SEQUENCE [MRNA] (ISOFORM 1)</scope>
    <source>
        <tissue>Mammary tumor</tissue>
    </source>
</reference>
<reference key="2">
    <citation type="journal article" date="1997" name="Proc. Natl. Acad. Sci. U.S.A.">
        <title>Identification of ERF-1 as a member of the AP2 transcription factor family.</title>
        <authorList>
            <person name="McPherson L.A."/>
            <person name="Baichwal V.R."/>
            <person name="Weigel R.J."/>
        </authorList>
    </citation>
    <scope>NUCLEOTIDE SEQUENCE [MRNA] (ISOFORM 1)</scope>
    <scope>PROTEIN SEQUENCE OF 203-211 AND 361-370</scope>
    <source>
        <tissue>Mammary tumor</tissue>
    </source>
</reference>
<reference key="3">
    <citation type="submission" date="2001-08" db="EMBL/GenBank/DDBJ databases">
        <title>Characterisation of the human AP-2gamma and AP-2beta genes.</title>
        <authorList>
            <person name="Haselton M.D."/>
            <person name="Ibbitt C.J."/>
            <person name="Hurst H.C."/>
        </authorList>
    </citation>
    <scope>NUCLEOTIDE SEQUENCE [GENOMIC DNA]</scope>
</reference>
<reference key="4">
    <citation type="journal article" date="2004" name="Nat. Genet.">
        <title>Complete sequencing and characterization of 21,243 full-length human cDNAs.</title>
        <authorList>
            <person name="Ota T."/>
            <person name="Suzuki Y."/>
            <person name="Nishikawa T."/>
            <person name="Otsuki T."/>
            <person name="Sugiyama T."/>
            <person name="Irie R."/>
            <person name="Wakamatsu A."/>
            <person name="Hayashi K."/>
            <person name="Sato H."/>
            <person name="Nagai K."/>
            <person name="Kimura K."/>
            <person name="Makita H."/>
            <person name="Sekine M."/>
            <person name="Obayashi M."/>
            <person name="Nishi T."/>
            <person name="Shibahara T."/>
            <person name="Tanaka T."/>
            <person name="Ishii S."/>
            <person name="Yamamoto J."/>
            <person name="Saito K."/>
            <person name="Kawai Y."/>
            <person name="Isono Y."/>
            <person name="Nakamura Y."/>
            <person name="Nagahari K."/>
            <person name="Murakami K."/>
            <person name="Yasuda T."/>
            <person name="Iwayanagi T."/>
            <person name="Wagatsuma M."/>
            <person name="Shiratori A."/>
            <person name="Sudo H."/>
            <person name="Hosoiri T."/>
            <person name="Kaku Y."/>
            <person name="Kodaira H."/>
            <person name="Kondo H."/>
            <person name="Sugawara M."/>
            <person name="Takahashi M."/>
            <person name="Kanda K."/>
            <person name="Yokoi T."/>
            <person name="Furuya T."/>
            <person name="Kikkawa E."/>
            <person name="Omura Y."/>
            <person name="Abe K."/>
            <person name="Kamihara K."/>
            <person name="Katsuta N."/>
            <person name="Sato K."/>
            <person name="Tanikawa M."/>
            <person name="Yamazaki M."/>
            <person name="Ninomiya K."/>
            <person name="Ishibashi T."/>
            <person name="Yamashita H."/>
            <person name="Murakawa K."/>
            <person name="Fujimori K."/>
            <person name="Tanai H."/>
            <person name="Kimata M."/>
            <person name="Watanabe M."/>
            <person name="Hiraoka S."/>
            <person name="Chiba Y."/>
            <person name="Ishida S."/>
            <person name="Ono Y."/>
            <person name="Takiguchi S."/>
            <person name="Watanabe S."/>
            <person name="Yosida M."/>
            <person name="Hotuta T."/>
            <person name="Kusano J."/>
            <person name="Kanehori K."/>
            <person name="Takahashi-Fujii A."/>
            <person name="Hara H."/>
            <person name="Tanase T.-O."/>
            <person name="Nomura Y."/>
            <person name="Togiya S."/>
            <person name="Komai F."/>
            <person name="Hara R."/>
            <person name="Takeuchi K."/>
            <person name="Arita M."/>
            <person name="Imose N."/>
            <person name="Musashino K."/>
            <person name="Yuuki H."/>
            <person name="Oshima A."/>
            <person name="Sasaki N."/>
            <person name="Aotsuka S."/>
            <person name="Yoshikawa Y."/>
            <person name="Matsunawa H."/>
            <person name="Ichihara T."/>
            <person name="Shiohata N."/>
            <person name="Sano S."/>
            <person name="Moriya S."/>
            <person name="Momiyama H."/>
            <person name="Satoh N."/>
            <person name="Takami S."/>
            <person name="Terashima Y."/>
            <person name="Suzuki O."/>
            <person name="Nakagawa S."/>
            <person name="Senoh A."/>
            <person name="Mizoguchi H."/>
            <person name="Goto Y."/>
            <person name="Shimizu F."/>
            <person name="Wakebe H."/>
            <person name="Hishigaki H."/>
            <person name="Watanabe T."/>
            <person name="Sugiyama A."/>
            <person name="Takemoto M."/>
            <person name="Kawakami B."/>
            <person name="Yamazaki M."/>
            <person name="Watanabe K."/>
            <person name="Kumagai A."/>
            <person name="Itakura S."/>
            <person name="Fukuzumi Y."/>
            <person name="Fujimori Y."/>
            <person name="Komiyama M."/>
            <person name="Tashiro H."/>
            <person name="Tanigami A."/>
            <person name="Fujiwara T."/>
            <person name="Ono T."/>
            <person name="Yamada K."/>
            <person name="Fujii Y."/>
            <person name="Ozaki K."/>
            <person name="Hirao M."/>
            <person name="Ohmori Y."/>
            <person name="Kawabata A."/>
            <person name="Hikiji T."/>
            <person name="Kobatake N."/>
            <person name="Inagaki H."/>
            <person name="Ikema Y."/>
            <person name="Okamoto S."/>
            <person name="Okitani R."/>
            <person name="Kawakami T."/>
            <person name="Noguchi S."/>
            <person name="Itoh T."/>
            <person name="Shigeta K."/>
            <person name="Senba T."/>
            <person name="Matsumura K."/>
            <person name="Nakajima Y."/>
            <person name="Mizuno T."/>
            <person name="Morinaga M."/>
            <person name="Sasaki M."/>
            <person name="Togashi T."/>
            <person name="Oyama M."/>
            <person name="Hata H."/>
            <person name="Watanabe M."/>
            <person name="Komatsu T."/>
            <person name="Mizushima-Sugano J."/>
            <person name="Satoh T."/>
            <person name="Shirai Y."/>
            <person name="Takahashi Y."/>
            <person name="Nakagawa K."/>
            <person name="Okumura K."/>
            <person name="Nagase T."/>
            <person name="Nomura N."/>
            <person name="Kikuchi H."/>
            <person name="Masuho Y."/>
            <person name="Yamashita R."/>
            <person name="Nakai K."/>
            <person name="Yada T."/>
            <person name="Nakamura Y."/>
            <person name="Ohara O."/>
            <person name="Isogai T."/>
            <person name="Sugano S."/>
        </authorList>
    </citation>
    <scope>NUCLEOTIDE SEQUENCE [LARGE SCALE MRNA] (ISOFORM 2)</scope>
    <source>
        <tissue>Mammary gland</tissue>
    </source>
</reference>
<reference key="5">
    <citation type="journal article" date="2001" name="Nature">
        <title>The DNA sequence and comparative analysis of human chromosome 20.</title>
        <authorList>
            <person name="Deloukas P."/>
            <person name="Matthews L.H."/>
            <person name="Ashurst J.L."/>
            <person name="Burton J."/>
            <person name="Gilbert J.G.R."/>
            <person name="Jones M."/>
            <person name="Stavrides G."/>
            <person name="Almeida J.P."/>
            <person name="Babbage A.K."/>
            <person name="Bagguley C.L."/>
            <person name="Bailey J."/>
            <person name="Barlow K.F."/>
            <person name="Bates K.N."/>
            <person name="Beard L.M."/>
            <person name="Beare D.M."/>
            <person name="Beasley O.P."/>
            <person name="Bird C.P."/>
            <person name="Blakey S.E."/>
            <person name="Bridgeman A.M."/>
            <person name="Brown A.J."/>
            <person name="Buck D."/>
            <person name="Burrill W.D."/>
            <person name="Butler A.P."/>
            <person name="Carder C."/>
            <person name="Carter N.P."/>
            <person name="Chapman J.C."/>
            <person name="Clamp M."/>
            <person name="Clark G."/>
            <person name="Clark L.N."/>
            <person name="Clark S.Y."/>
            <person name="Clee C.M."/>
            <person name="Clegg S."/>
            <person name="Cobley V.E."/>
            <person name="Collier R.E."/>
            <person name="Connor R.E."/>
            <person name="Corby N.R."/>
            <person name="Coulson A."/>
            <person name="Coville G.J."/>
            <person name="Deadman R."/>
            <person name="Dhami P.D."/>
            <person name="Dunn M."/>
            <person name="Ellington A.G."/>
            <person name="Frankland J.A."/>
            <person name="Fraser A."/>
            <person name="French L."/>
            <person name="Garner P."/>
            <person name="Grafham D.V."/>
            <person name="Griffiths C."/>
            <person name="Griffiths M.N.D."/>
            <person name="Gwilliam R."/>
            <person name="Hall R.E."/>
            <person name="Hammond S."/>
            <person name="Harley J.L."/>
            <person name="Heath P.D."/>
            <person name="Ho S."/>
            <person name="Holden J.L."/>
            <person name="Howden P.J."/>
            <person name="Huckle E."/>
            <person name="Hunt A.R."/>
            <person name="Hunt S.E."/>
            <person name="Jekosch K."/>
            <person name="Johnson C.M."/>
            <person name="Johnson D."/>
            <person name="Kay M.P."/>
            <person name="Kimberley A.M."/>
            <person name="King A."/>
            <person name="Knights A."/>
            <person name="Laird G.K."/>
            <person name="Lawlor S."/>
            <person name="Lehvaeslaiho M.H."/>
            <person name="Leversha M.A."/>
            <person name="Lloyd C."/>
            <person name="Lloyd D.M."/>
            <person name="Lovell J.D."/>
            <person name="Marsh V.L."/>
            <person name="Martin S.L."/>
            <person name="McConnachie L.J."/>
            <person name="McLay K."/>
            <person name="McMurray A.A."/>
            <person name="Milne S.A."/>
            <person name="Mistry D."/>
            <person name="Moore M.J.F."/>
            <person name="Mullikin J.C."/>
            <person name="Nickerson T."/>
            <person name="Oliver K."/>
            <person name="Parker A."/>
            <person name="Patel R."/>
            <person name="Pearce T.A.V."/>
            <person name="Peck A.I."/>
            <person name="Phillimore B.J.C.T."/>
            <person name="Prathalingam S.R."/>
            <person name="Plumb R.W."/>
            <person name="Ramsay H."/>
            <person name="Rice C.M."/>
            <person name="Ross M.T."/>
            <person name="Scott C.E."/>
            <person name="Sehra H.K."/>
            <person name="Shownkeen R."/>
            <person name="Sims S."/>
            <person name="Skuce C.D."/>
            <person name="Smith M.L."/>
            <person name="Soderlund C."/>
            <person name="Steward C.A."/>
            <person name="Sulston J.E."/>
            <person name="Swann R.M."/>
            <person name="Sycamore N."/>
            <person name="Taylor R."/>
            <person name="Tee L."/>
            <person name="Thomas D.W."/>
            <person name="Thorpe A."/>
            <person name="Tracey A."/>
            <person name="Tromans A.C."/>
            <person name="Vaudin M."/>
            <person name="Wall M."/>
            <person name="Wallis J.M."/>
            <person name="Whitehead S.L."/>
            <person name="Whittaker P."/>
            <person name="Willey D.L."/>
            <person name="Williams L."/>
            <person name="Williams S.A."/>
            <person name="Wilming L."/>
            <person name="Wray P.W."/>
            <person name="Hubbard T."/>
            <person name="Durbin R.M."/>
            <person name="Bentley D.R."/>
            <person name="Beck S."/>
            <person name="Rogers J."/>
        </authorList>
    </citation>
    <scope>NUCLEOTIDE SEQUENCE [LARGE SCALE GENOMIC DNA]</scope>
</reference>
<reference key="6">
    <citation type="journal article" date="2004" name="Genome Res.">
        <title>The status, quality, and expansion of the NIH full-length cDNA project: the Mammalian Gene Collection (MGC).</title>
        <authorList>
            <consortium name="The MGC Project Team"/>
        </authorList>
    </citation>
    <scope>NUCLEOTIDE SEQUENCE [LARGE SCALE MRNA] (ISOFORM 1)</scope>
    <source>
        <tissue>Ovary</tissue>
        <tissue>Skin</tissue>
    </source>
</reference>
<reference key="7">
    <citation type="submission" date="2000-04" db="EMBL/GenBank/DDBJ databases">
        <title>Structure of human AP-2gamma gene.</title>
        <authorList>
            <person name="Nishizawa M."/>
            <person name="Ito S."/>
        </authorList>
    </citation>
    <scope>NUCLEOTIDE SEQUENCE [GENOMIC DNA] OF 17-450</scope>
    <source>
        <tissue>Liver</tissue>
    </source>
</reference>
<reference key="8">
    <citation type="journal article" date="2001" name="Nat. Genet.">
        <title>Cardiac malformations, adrenal agenesis, neural crest defects and exencephaly in mice lacking Cited2, a new Tfap2 co-activator.</title>
        <authorList>
            <person name="Bamforth S.D."/>
            <person name="Braganca J."/>
            <person name="Eloranta J.J."/>
            <person name="Murdoch J.N."/>
            <person name="Marques F.I."/>
            <person name="Kranc K.R."/>
            <person name="Farza H."/>
            <person name="Henderson D.J."/>
            <person name="Hurst H.C."/>
            <person name="Bhattacharya S."/>
        </authorList>
    </citation>
    <scope>FUNCTION</scope>
    <scope>INTERACTION WITH CITED2</scope>
</reference>
<reference key="9">
    <citation type="journal article" date="2002" name="J. Biol. Chem.">
        <title>Human CREB-binding protein/p300-interacting transactivator with ED-rich tail (CITED) 4, a new member of the CITED family, functions as a co-activator for transcription factor AP-2.</title>
        <authorList>
            <person name="Braganca J."/>
            <person name="Swingler T."/>
            <person name="Marques F.I.R."/>
            <person name="Jones T."/>
            <person name="Eloranta J.J."/>
            <person name="Hurst H.C."/>
            <person name="Shioda T."/>
            <person name="Bhattacharya S."/>
        </authorList>
    </citation>
    <scope>INTERACTION WITH CITED4</scope>
</reference>
<reference key="10">
    <citation type="journal article" date="2002" name="J. Biol. Chem.">
        <title>Transcription factor AP-2 interacts with the SUMO-conjugating enzyme UBC9 and is sumolated in vivo.</title>
        <authorList>
            <person name="Eloranta J.J."/>
            <person name="Hurst H.C."/>
        </authorList>
    </citation>
    <scope>INTERACTION WITH UBE2I</scope>
    <scope>SUMOYLATION AT LYS-10</scope>
</reference>
<reference key="11">
    <citation type="journal article" date="2003" name="J. Biol. Chem.">
        <title>Physical and functional interactions among AP-2 transcription factors, p300/CREB-binding protein, and CITED2.</title>
        <authorList>
            <person name="Braganca J."/>
            <person name="Eloranta J.J."/>
            <person name="Bamforth S.D."/>
            <person name="Ibbitt J.C."/>
            <person name="Hurst H.C."/>
            <person name="Bhattacharya S."/>
        </authorList>
    </citation>
    <scope>INTERACTION WITH CITED2</scope>
</reference>
<reference key="12">
    <citation type="journal article" date="2004" name="Cancer Res.">
        <title>Physical and functional interactions between the Wwox tumor suppressor protein and the AP-2gamma transcription factor.</title>
        <authorList>
            <person name="Aqeilan R.I."/>
            <person name="Palamarchuk A."/>
            <person name="Weigel R.J."/>
            <person name="Herrero J.J."/>
            <person name="Pekarsky Y."/>
            <person name="Croce C.M."/>
        </authorList>
    </citation>
    <scope>INTERACTION WITH WWOX</scope>
    <scope>DOMAIN</scope>
    <scope>MUTAGENESIS OF TYR-59 AND TYR-64</scope>
</reference>
<reference key="13">
    <citation type="journal article" date="2008" name="Proc. Natl. Acad. Sci. U.S.A.">
        <title>A quantitative atlas of mitotic phosphorylation.</title>
        <authorList>
            <person name="Dephoure N."/>
            <person name="Zhou C."/>
            <person name="Villen J."/>
            <person name="Beausoleil S.A."/>
            <person name="Bakalarski C.E."/>
            <person name="Elledge S.J."/>
            <person name="Gygi S.P."/>
        </authorList>
    </citation>
    <scope>PHOSPHORYLATION [LARGE SCALE ANALYSIS] AT SER-434</scope>
    <scope>IDENTIFICATION BY MASS SPECTROMETRY [LARGE SCALE ANALYSIS]</scope>
    <source>
        <tissue>Cervix carcinoma</tissue>
    </source>
</reference>
<reference key="14">
    <citation type="journal article" date="2009" name="Anal. Chem.">
        <title>Lys-N and trypsin cover complementary parts of the phosphoproteome in a refined SCX-based approach.</title>
        <authorList>
            <person name="Gauci S."/>
            <person name="Helbig A.O."/>
            <person name="Slijper M."/>
            <person name="Krijgsveld J."/>
            <person name="Heck A.J."/>
            <person name="Mohammed S."/>
        </authorList>
    </citation>
    <scope>IDENTIFICATION BY MASS SPECTROMETRY [LARGE SCALE ANALYSIS]</scope>
</reference>
<reference key="15">
    <citation type="journal article" date="2009" name="J. Cell. Biochem.">
        <title>The interaction of KCTD1 with transcription factor AP-2alpha inhibits its transactivation.</title>
        <authorList>
            <person name="Ding X."/>
            <person name="Luo C."/>
            <person name="Zhou J."/>
            <person name="Zhong Y."/>
            <person name="Hu X."/>
            <person name="Zhou F."/>
            <person name="Ren K."/>
            <person name="Gan L."/>
            <person name="He A."/>
            <person name="Zhu J."/>
            <person name="Gao X."/>
            <person name="Zhang J."/>
        </authorList>
    </citation>
    <scope>INTERACTION WITH KCTD1</scope>
</reference>
<reference key="16">
    <citation type="journal article" date="2011" name="Sci. Signal.">
        <title>System-wide temporal characterization of the proteome and phosphoproteome of human embryonic stem cell differentiation.</title>
        <authorList>
            <person name="Rigbolt K.T."/>
            <person name="Prokhorova T.A."/>
            <person name="Akimov V."/>
            <person name="Henningsen J."/>
            <person name="Johansen P.T."/>
            <person name="Kratchmarova I."/>
            <person name="Kassem M."/>
            <person name="Mann M."/>
            <person name="Olsen J.V."/>
            <person name="Blagoev B."/>
        </authorList>
    </citation>
    <scope>PHOSPHORYLATION [LARGE SCALE ANALYSIS] AT SER-434</scope>
    <scope>IDENTIFICATION BY MASS SPECTROMETRY [LARGE SCALE ANALYSIS]</scope>
</reference>
<reference key="17">
    <citation type="journal article" date="2013" name="J. Proteome Res.">
        <title>Toward a comprehensive characterization of a human cancer cell phosphoproteome.</title>
        <authorList>
            <person name="Zhou H."/>
            <person name="Di Palma S."/>
            <person name="Preisinger C."/>
            <person name="Peng M."/>
            <person name="Polat A.N."/>
            <person name="Heck A.J."/>
            <person name="Mohammed S."/>
        </authorList>
    </citation>
    <scope>PHOSPHORYLATION [LARGE SCALE ANALYSIS] AT SER-434</scope>
    <scope>IDENTIFICATION BY MASS SPECTROMETRY [LARGE SCALE ANALYSIS]</scope>
    <source>
        <tissue>Cervix carcinoma</tissue>
    </source>
</reference>
<reference key="18">
    <citation type="journal article" date="2014" name="Cancer Res.">
        <title>Differential regulation of estrogen receptor alpha expression in breast cancer cells by metastasis-associated protein 1.</title>
        <authorList>
            <person name="Kang H.J."/>
            <person name="Lee M.H."/>
            <person name="Kang H.L."/>
            <person name="Kim S.H."/>
            <person name="Ahn J.R."/>
            <person name="Na H."/>
            <person name="Na T.Y."/>
            <person name="Kim Y.N."/>
            <person name="Seong J.K."/>
            <person name="Lee M.O."/>
        </authorList>
    </citation>
    <scope>FUNCTION</scope>
    <scope>INTERACTION WITH MTA1</scope>
    <scope>SUBCELLULAR LOCATION</scope>
</reference>
<gene>
    <name type="primary">TFAP2C</name>
</gene>